<protein>
    <recommendedName>
        <fullName>Spore wall and anchoring disk complex protein EnP1</fullName>
    </recommendedName>
    <alternativeName>
        <fullName>Host cell adhesion protein EnP1</fullName>
    </alternativeName>
</protein>
<name>ENP1_ENCIN</name>
<gene>
    <name type="primary">EnP1</name>
</gene>
<dbReference type="EMBL" id="EF539266">
    <property type="protein sequence ID" value="ABU24317.1"/>
    <property type="molecule type" value="Genomic_DNA"/>
</dbReference>
<dbReference type="GlyCosmos" id="A7TZU4">
    <property type="glycosylation" value="3 sites, No reported glycans"/>
</dbReference>
<dbReference type="VEuPathDB" id="MicrosporidiaDB:Eint_010720"/>
<dbReference type="GO" id="GO:0031160">
    <property type="term" value="C:spore wall"/>
    <property type="evidence" value="ECO:0000314"/>
    <property type="project" value="CACAO"/>
</dbReference>
<dbReference type="GO" id="GO:0007155">
    <property type="term" value="P:cell adhesion"/>
    <property type="evidence" value="ECO:0007669"/>
    <property type="project" value="UniProtKB-KW"/>
</dbReference>
<dbReference type="GO" id="GO:0030435">
    <property type="term" value="P:sporulation resulting in formation of a cellular spore"/>
    <property type="evidence" value="ECO:0007669"/>
    <property type="project" value="UniProtKB-KW"/>
</dbReference>
<sequence length="348" mass="39101">MKLLGLLISAFGAINALKIKALYLSCDYELRPYNAVIDSQCMAFALNGSNIHEAIRYLNAMNIDKAYVLYWNDHDLHQNPMVLHKNGALAPFDRYTNTAKHVLCVEACSCPGPQSRPVVCPENNGASVSSPCPPCGQGNNTTVCDKVVVNPQPVKPLPAPCTPCAPCESSSSEKSESKECMTFPRICKKKCGPRHGRSPKKVEIVKSQKTYTFDIERYKRRGDVVVRVCSQDCKDKFEKFVLTKTGEIRKGKDKKCIPEPLPECLQCPKNLYKLKSGIEAKVCSEVCMYINSKCEIFVLIGDCDFYKVVMNERRRKQSSFHLKKIRGQKLRELIRQGLFGVEFSPLKC</sequence>
<comment type="function">
    <text evidence="2">Spore wall protein involved in the adhesion to host cells surface glycoaminoglycans (GAGs). Microsporidian spore adherence is an integral part of activation and host cell infection.</text>
</comment>
<comment type="subcellular location">
    <subcellularLocation>
        <location evidence="2">Spore wall</location>
    </subcellularLocation>
    <subcellularLocation>
        <location evidence="2">Spore</location>
        <location evidence="2">Perispore</location>
    </subcellularLocation>
    <text>Also localizes at the anchoring disk complex which consists of the polar sac and the anchoring disk, playing a crucial role in the rupture of the spore wall and the subsequent release of the polar tube following activation.</text>
</comment>
<comment type="domain">
    <text evidence="2">Heparin-binding motifs (HBM) are characterized by an XBBXBX or XBBBXXBX sequence, where X is any neutral amino acid and B is a positively charged basic amino acid, and are defined as the consensus sequence necessary for protein-heparin interactions. HBM motifs may be involved in spore adherence to host cells.</text>
</comment>
<proteinExistence type="inferred from homology"/>
<evidence type="ECO:0000255" key="1"/>
<evidence type="ECO:0000269" key="2">
    <source>
    </source>
</evidence>
<feature type="signal peptide" evidence="1">
    <location>
        <begin position="1"/>
        <end position="16"/>
    </location>
</feature>
<feature type="chain" id="PRO_0000377524" description="Spore wall and anchoring disk complex protein EnP1">
    <location>
        <begin position="17"/>
        <end position="348"/>
    </location>
</feature>
<feature type="short sequence motif" description="HBM1">
    <location>
        <begin position="193"/>
        <end position="198"/>
    </location>
</feature>
<feature type="short sequence motif" description="HBM2">
    <location>
        <begin position="248"/>
        <end position="256"/>
    </location>
</feature>
<feature type="short sequence motif" description="HBM3">
    <location>
        <begin position="322"/>
        <end position="327"/>
    </location>
</feature>
<feature type="glycosylation site" description="N-linked (GlcNAc...) asparagine" evidence="1">
    <location>
        <position position="47"/>
    </location>
</feature>
<feature type="glycosylation site" description="N-linked (GlcNAc...) asparagine" evidence="1">
    <location>
        <position position="139"/>
    </location>
</feature>
<feature type="glycosylation site" description="N-linked (GlcNAc...) asparagine" evidence="1">
    <location>
        <position position="140"/>
    </location>
</feature>
<accession>A7TZU4</accession>
<keyword id="KW-0130">Cell adhesion</keyword>
<keyword id="KW-0325">Glycoprotein</keyword>
<keyword id="KW-0732">Signal</keyword>
<keyword id="KW-0749">Sporulation</keyword>
<reference key="1">
    <citation type="journal article" date="2007" name="Eukaryot. Cell">
        <title>EnP1, a microsporidian spore wall protein that enables spores to adhere to and infect host cells in vitro.</title>
        <authorList>
            <person name="Southern T.R."/>
            <person name="Jolly C.E."/>
            <person name="Lester M.E."/>
            <person name="Hayman J.R."/>
        </authorList>
    </citation>
    <scope>NUCLEOTIDE SEQUENCE [GENOMIC DNA]</scope>
    <scope>DOMAIN</scope>
    <scope>SUBCELLULAR LOCATION</scope>
    <scope>FUNCTION</scope>
</reference>
<organism>
    <name type="scientific">Encephalitozoon intestinalis</name>
    <name type="common">Microsporidian parasite</name>
    <dbReference type="NCBI Taxonomy" id="58839"/>
    <lineage>
        <taxon>Eukaryota</taxon>
        <taxon>Fungi</taxon>
        <taxon>Fungi incertae sedis</taxon>
        <taxon>Microsporidia</taxon>
        <taxon>Unikaryonidae</taxon>
        <taxon>Encephalitozoon</taxon>
    </lineage>
</organism>